<accession>C3N7L7</accession>
<reference key="1">
    <citation type="journal article" date="2009" name="Proc. Natl. Acad. Sci. U.S.A.">
        <title>Biogeography of the Sulfolobus islandicus pan-genome.</title>
        <authorList>
            <person name="Reno M.L."/>
            <person name="Held N.L."/>
            <person name="Fields C.J."/>
            <person name="Burke P.V."/>
            <person name="Whitaker R.J."/>
        </authorList>
    </citation>
    <scope>NUCLEOTIDE SEQUENCE [LARGE SCALE GENOMIC DNA]</scope>
    <source>
        <strain>Y.G.57.14 / Yellowstone #1</strain>
    </source>
</reference>
<sequence length="255" mass="28059">MKIRKKKMKLKGKVKKYLMDKLNDNEKLHFSLLDPFKINSSEELKYIAKNLYNVGTDAFLIGGTLGVSKDKLDFVISLLDDYEIPKIIFPSNINLLSEKADALLFLSLLNSDDIYYVIGAQIVAAPIIKMLQMEVIPTAYVIVGHGGTAAHIGKARVIPYDNFELATAYTLAAEYLGMDFVYLEAGSGAPEPIRPEMISFIKKASSIPLIIGGGIRSVEVALKLVEAGANIIVTGNIIERDVDKAIKIIRGIKNK</sequence>
<dbReference type="EC" id="2.5.1.41" evidence="1"/>
<dbReference type="EMBL" id="CP001403">
    <property type="protein sequence ID" value="ACP46211.1"/>
    <property type="molecule type" value="Genomic_DNA"/>
</dbReference>
<dbReference type="RefSeq" id="WP_012714014.1">
    <property type="nucleotide sequence ID" value="NC_012622.1"/>
</dbReference>
<dbReference type="SMR" id="C3N7L7"/>
<dbReference type="KEGG" id="siy:YG5714_1955"/>
<dbReference type="HOGENOM" id="CLU_068610_0_0_2"/>
<dbReference type="UniPathway" id="UPA00940"/>
<dbReference type="Proteomes" id="UP000002308">
    <property type="component" value="Chromosome"/>
</dbReference>
<dbReference type="GO" id="GO:0005737">
    <property type="term" value="C:cytoplasm"/>
    <property type="evidence" value="ECO:0007669"/>
    <property type="project" value="UniProtKB-SubCell"/>
</dbReference>
<dbReference type="GO" id="GO:0000287">
    <property type="term" value="F:magnesium ion binding"/>
    <property type="evidence" value="ECO:0007669"/>
    <property type="project" value="UniProtKB-UniRule"/>
</dbReference>
<dbReference type="GO" id="GO:0047294">
    <property type="term" value="F:phosphoglycerol geranylgeranyltransferase activity"/>
    <property type="evidence" value="ECO:0007669"/>
    <property type="project" value="UniProtKB-UniRule"/>
</dbReference>
<dbReference type="GO" id="GO:0046474">
    <property type="term" value="P:glycerophospholipid biosynthetic process"/>
    <property type="evidence" value="ECO:0007669"/>
    <property type="project" value="UniProtKB-UniRule"/>
</dbReference>
<dbReference type="CDD" id="cd02812">
    <property type="entry name" value="PcrB_like"/>
    <property type="match status" value="1"/>
</dbReference>
<dbReference type="FunFam" id="3.20.20.390:FF:000001">
    <property type="entry name" value="Heptaprenylglyceryl phosphate synthase"/>
    <property type="match status" value="1"/>
</dbReference>
<dbReference type="Gene3D" id="3.20.20.390">
    <property type="entry name" value="FMN-linked oxidoreductases"/>
    <property type="match status" value="1"/>
</dbReference>
<dbReference type="HAMAP" id="MF_00112">
    <property type="entry name" value="GGGP_HepGP_synthase"/>
    <property type="match status" value="1"/>
</dbReference>
<dbReference type="InterPro" id="IPR039074">
    <property type="entry name" value="GGGP/HepGP_synthase_I"/>
</dbReference>
<dbReference type="InterPro" id="IPR038597">
    <property type="entry name" value="GGGP/HepGP_synthase_sf"/>
</dbReference>
<dbReference type="InterPro" id="IPR008205">
    <property type="entry name" value="GGGP_HepGP_synthase"/>
</dbReference>
<dbReference type="InterPro" id="IPR010946">
    <property type="entry name" value="GGGP_synth"/>
</dbReference>
<dbReference type="NCBIfam" id="TIGR01769">
    <property type="entry name" value="GGGP"/>
    <property type="match status" value="1"/>
</dbReference>
<dbReference type="NCBIfam" id="TIGR01768">
    <property type="entry name" value="GGGP-family"/>
    <property type="match status" value="1"/>
</dbReference>
<dbReference type="NCBIfam" id="NF003198">
    <property type="entry name" value="PRK04169.1-2"/>
    <property type="match status" value="1"/>
</dbReference>
<dbReference type="NCBIfam" id="NF003202">
    <property type="entry name" value="PRK04169.1-6"/>
    <property type="match status" value="1"/>
</dbReference>
<dbReference type="PANTHER" id="PTHR40029">
    <property type="match status" value="1"/>
</dbReference>
<dbReference type="PANTHER" id="PTHR40029:SF2">
    <property type="entry name" value="HEPTAPRENYLGLYCERYL PHOSPHATE SYNTHASE"/>
    <property type="match status" value="1"/>
</dbReference>
<dbReference type="Pfam" id="PF01884">
    <property type="entry name" value="PcrB"/>
    <property type="match status" value="1"/>
</dbReference>
<dbReference type="SUPFAM" id="SSF51395">
    <property type="entry name" value="FMN-linked oxidoreductases"/>
    <property type="match status" value="1"/>
</dbReference>
<protein>
    <recommendedName>
        <fullName evidence="1">Geranylgeranylglyceryl phosphate synthase</fullName>
        <shortName evidence="1">GGGP synthase</shortName>
        <shortName evidence="1">GGGPS</shortName>
        <ecNumber evidence="1">2.5.1.41</ecNumber>
    </recommendedName>
    <alternativeName>
        <fullName evidence="1">(S)-3-O-geranylgeranylglyceryl phosphate synthase</fullName>
    </alternativeName>
    <alternativeName>
        <fullName evidence="1">Phosphoglycerol geranylgeranyltransferase</fullName>
    </alternativeName>
</protein>
<evidence type="ECO:0000255" key="1">
    <source>
        <dbReference type="HAMAP-Rule" id="MF_00112"/>
    </source>
</evidence>
<gene>
    <name type="ordered locus">YG5714_1955</name>
</gene>
<proteinExistence type="inferred from homology"/>
<name>GGGPS_SACI7</name>
<comment type="function">
    <text evidence="1">Prenyltransferase that catalyzes the transfer of the geranylgeranyl moiety of geranylgeranyl diphosphate (GGPP) to the C3 hydroxyl of sn-glycerol-1-phosphate (G1P). This reaction is the first ether-bond-formation step in the biosynthesis of archaeal membrane lipids.</text>
</comment>
<comment type="catalytic activity">
    <reaction evidence="1">
        <text>sn-glycerol 1-phosphate + (2E,6E,10E)-geranylgeranyl diphosphate = sn-3-O-(geranylgeranyl)glycerol 1-phosphate + diphosphate</text>
        <dbReference type="Rhea" id="RHEA:23404"/>
        <dbReference type="ChEBI" id="CHEBI:33019"/>
        <dbReference type="ChEBI" id="CHEBI:57677"/>
        <dbReference type="ChEBI" id="CHEBI:57685"/>
        <dbReference type="ChEBI" id="CHEBI:58756"/>
        <dbReference type="EC" id="2.5.1.41"/>
    </reaction>
</comment>
<comment type="cofactor">
    <cofactor evidence="1">
        <name>Mg(2+)</name>
        <dbReference type="ChEBI" id="CHEBI:18420"/>
    </cofactor>
</comment>
<comment type="pathway">
    <text evidence="1">Membrane lipid metabolism; glycerophospholipid metabolism.</text>
</comment>
<comment type="subcellular location">
    <subcellularLocation>
        <location evidence="1">Cytoplasm</location>
    </subcellularLocation>
</comment>
<comment type="similarity">
    <text evidence="1">Belongs to the GGGP/HepGP synthase family. Group II subfamily.</text>
</comment>
<organism>
    <name type="scientific">Saccharolobus islandicus (strain Y.G.57.14 / Yellowstone #1)</name>
    <name type="common">Sulfolobus islandicus</name>
    <dbReference type="NCBI Taxonomy" id="439386"/>
    <lineage>
        <taxon>Archaea</taxon>
        <taxon>Thermoproteota</taxon>
        <taxon>Thermoprotei</taxon>
        <taxon>Sulfolobales</taxon>
        <taxon>Sulfolobaceae</taxon>
        <taxon>Saccharolobus</taxon>
    </lineage>
</organism>
<feature type="chain" id="PRO_1000202946" description="Geranylgeranylglyceryl phosphate synthase">
    <location>
        <begin position="1"/>
        <end position="255"/>
    </location>
</feature>
<feature type="binding site" evidence="1">
    <location>
        <position position="34"/>
    </location>
    <ligand>
        <name>Mg(2+)</name>
        <dbReference type="ChEBI" id="CHEBI:18420"/>
    </ligand>
</feature>
<feature type="binding site" evidence="1">
    <location>
        <position position="64"/>
    </location>
    <ligand>
        <name>Mg(2+)</name>
        <dbReference type="ChEBI" id="CHEBI:18420"/>
    </ligand>
</feature>
<feature type="binding site" evidence="1">
    <location>
        <begin position="182"/>
        <end position="188"/>
    </location>
    <ligand>
        <name>sn-glycerol 1-phosphate</name>
        <dbReference type="ChEBI" id="CHEBI:57685"/>
    </ligand>
</feature>
<feature type="binding site" evidence="1">
    <location>
        <begin position="213"/>
        <end position="214"/>
    </location>
    <ligand>
        <name>sn-glycerol 1-phosphate</name>
        <dbReference type="ChEBI" id="CHEBI:57685"/>
    </ligand>
</feature>
<feature type="binding site" evidence="1">
    <location>
        <begin position="235"/>
        <end position="236"/>
    </location>
    <ligand>
        <name>sn-glycerol 1-phosphate</name>
        <dbReference type="ChEBI" id="CHEBI:57685"/>
    </ligand>
</feature>
<keyword id="KW-0963">Cytoplasm</keyword>
<keyword id="KW-0444">Lipid biosynthesis</keyword>
<keyword id="KW-0443">Lipid metabolism</keyword>
<keyword id="KW-0460">Magnesium</keyword>
<keyword id="KW-0479">Metal-binding</keyword>
<keyword id="KW-0594">Phospholipid biosynthesis</keyword>
<keyword id="KW-1208">Phospholipid metabolism</keyword>
<keyword id="KW-0808">Transferase</keyword>